<evidence type="ECO:0000250" key="1"/>
<evidence type="ECO:0000255" key="2">
    <source>
        <dbReference type="PROSITE-ProRule" id="PRU00808"/>
    </source>
</evidence>
<dbReference type="EMBL" id="AF140353">
    <property type="protein sequence ID" value="AAD31877.1"/>
    <property type="molecule type" value="Genomic_DNA"/>
</dbReference>
<dbReference type="SMR" id="Q9XZG5"/>
<dbReference type="OMA" id="RSMIDHA"/>
<dbReference type="BRENDA" id="3.4.25.1">
    <property type="organism ID" value="6519"/>
</dbReference>
<dbReference type="GO" id="GO:0005829">
    <property type="term" value="C:cytosol"/>
    <property type="evidence" value="ECO:0000247"/>
    <property type="project" value="GeneDB"/>
</dbReference>
<dbReference type="GO" id="GO:0005634">
    <property type="term" value="C:nucleus"/>
    <property type="evidence" value="ECO:0000247"/>
    <property type="project" value="GeneDB"/>
</dbReference>
<dbReference type="GO" id="GO:0019773">
    <property type="term" value="C:proteasome core complex, alpha-subunit complex"/>
    <property type="evidence" value="ECO:0000250"/>
    <property type="project" value="UniProtKB"/>
</dbReference>
<dbReference type="GO" id="GO:0043161">
    <property type="term" value="P:proteasome-mediated ubiquitin-dependent protein catabolic process"/>
    <property type="evidence" value="ECO:0007669"/>
    <property type="project" value="InterPro"/>
</dbReference>
<dbReference type="GO" id="GO:0006511">
    <property type="term" value="P:ubiquitin-dependent protein catabolic process"/>
    <property type="evidence" value="ECO:0000255"/>
    <property type="project" value="GeneDB"/>
</dbReference>
<dbReference type="CDD" id="cd03753">
    <property type="entry name" value="proteasome_alpha_type_5"/>
    <property type="match status" value="1"/>
</dbReference>
<dbReference type="FunFam" id="3.60.20.10:FF:000019">
    <property type="entry name" value="Proteasome subunit alpha type"/>
    <property type="match status" value="1"/>
</dbReference>
<dbReference type="Gene3D" id="3.60.20.10">
    <property type="entry name" value="Glutamine Phosphoribosylpyrophosphate, subunit 1, domain 1"/>
    <property type="match status" value="1"/>
</dbReference>
<dbReference type="InterPro" id="IPR029055">
    <property type="entry name" value="Ntn_hydrolases_N"/>
</dbReference>
<dbReference type="InterPro" id="IPR050115">
    <property type="entry name" value="Proteasome_alpha"/>
</dbReference>
<dbReference type="InterPro" id="IPR023332">
    <property type="entry name" value="Proteasome_alpha-type"/>
</dbReference>
<dbReference type="InterPro" id="IPR033812">
    <property type="entry name" value="Proteasome_alpha_type_5"/>
</dbReference>
<dbReference type="InterPro" id="IPR000426">
    <property type="entry name" value="Proteasome_asu_N"/>
</dbReference>
<dbReference type="InterPro" id="IPR001353">
    <property type="entry name" value="Proteasome_sua/b"/>
</dbReference>
<dbReference type="NCBIfam" id="NF003075">
    <property type="entry name" value="PRK03996.1"/>
    <property type="match status" value="1"/>
</dbReference>
<dbReference type="PANTHER" id="PTHR11599">
    <property type="entry name" value="PROTEASOME SUBUNIT ALPHA/BETA"/>
    <property type="match status" value="1"/>
</dbReference>
<dbReference type="Pfam" id="PF00227">
    <property type="entry name" value="Proteasome"/>
    <property type="match status" value="1"/>
</dbReference>
<dbReference type="Pfam" id="PF10584">
    <property type="entry name" value="Proteasome_A_N"/>
    <property type="match status" value="1"/>
</dbReference>
<dbReference type="SMART" id="SM00948">
    <property type="entry name" value="Proteasome_A_N"/>
    <property type="match status" value="1"/>
</dbReference>
<dbReference type="SUPFAM" id="SSF56235">
    <property type="entry name" value="N-terminal nucleophile aminohydrolases (Ntn hydrolases)"/>
    <property type="match status" value="1"/>
</dbReference>
<dbReference type="PROSITE" id="PS00388">
    <property type="entry name" value="PROTEASOME_ALPHA_1"/>
    <property type="match status" value="1"/>
</dbReference>
<dbReference type="PROSITE" id="PS51475">
    <property type="entry name" value="PROTEASOME_ALPHA_2"/>
    <property type="match status" value="1"/>
</dbReference>
<reference key="1">
    <citation type="journal article" date="1999" name="Biochem. J.">
        <title>Alpha-5 subunit in Trypanosoma brucei proteasome can self-assemble to form a cylinder of four stacked heptamer rings.</title>
        <authorList>
            <person name="Yao Y."/>
            <person name="Toth C.R."/>
            <person name="Huang L."/>
            <person name="Wong M.L."/>
            <person name="Dias P."/>
            <person name="Burlingame A.L."/>
            <person name="Coffino P."/>
            <person name="Wang C.C."/>
        </authorList>
    </citation>
    <scope>NUCLEOTIDE SEQUENCE [GENOMIC DNA]</scope>
    <source>
        <strain>427</strain>
    </source>
</reference>
<proteinExistence type="inferred from homology"/>
<comment type="function">
    <text>The proteasome is a multicatalytic proteinase complex which is characterized by its ability to cleave peptides with Arg, Phe, Tyr, Leu, and Glu adjacent to the leaving group at neutral or slightly basic pH. The proteasome has an ATP-dependent proteolytic activity.</text>
</comment>
<comment type="subunit">
    <text evidence="1">The 26S proteasome consists of a 20S proteasome core and two 19S regulatory subunits. The 20S proteasome core is composed of 28 subunits that are arranged in four stacked rings, resulting in a barrel-shaped structure. The two end rings are each formed by seven alpha subunits, and the two central rings are each formed by seven beta subunits. The catalytic chamber with the active sites is on the inside of the barrel (By similarity).</text>
</comment>
<comment type="subcellular location">
    <subcellularLocation>
        <location evidence="1">Cytoplasm</location>
    </subcellularLocation>
    <subcellularLocation>
        <location evidence="1">Nucleus</location>
    </subcellularLocation>
</comment>
<comment type="similarity">
    <text evidence="2">Belongs to the peptidase T1A family.</text>
</comment>
<name>PSA5_TRYBB</name>
<organism>
    <name type="scientific">Trypanosoma brucei brucei</name>
    <dbReference type="NCBI Taxonomy" id="5702"/>
    <lineage>
        <taxon>Eukaryota</taxon>
        <taxon>Discoba</taxon>
        <taxon>Euglenozoa</taxon>
        <taxon>Kinetoplastea</taxon>
        <taxon>Metakinetoplastina</taxon>
        <taxon>Trypanosomatida</taxon>
        <taxon>Trypanosomatidae</taxon>
        <taxon>Trypanosoma</taxon>
    </lineage>
</organism>
<sequence length="246" mass="27177">MFSSKTEYDRGVNTFSPEGRIFQIEYAIEAIKLGSTSLGIQTPDAVIIAAEKRVPSTLVDPSSVNKILEIDHHIGTVLSGMVADARILVDHARVEAQNHRFTYDEPMSVESCALATCDLSVQFGESGGRKKLMSRPFGVSLLIAGVDENGPQLWQTDPSGTYTRYDAQAIGGGAEAAQTVFSERYHRNMTVEEAENLTVQILRQVMEEKLTKTSVEIAIVPVSTGRLQIYDQEQIQRIIDRQAEEN</sequence>
<feature type="chain" id="PRO_0000124123" description="Proteasome subunit alpha type-5">
    <location>
        <begin position="1"/>
        <end position="246"/>
    </location>
</feature>
<keyword id="KW-0963">Cytoplasm</keyword>
<keyword id="KW-0539">Nucleus</keyword>
<keyword id="KW-0647">Proteasome</keyword>
<protein>
    <recommendedName>
        <fullName>Proteasome subunit alpha type-5</fullName>
    </recommendedName>
    <alternativeName>
        <fullName>20S proteasome subunit alpha-5</fullName>
    </alternativeName>
</protein>
<accession>Q9XZG5</accession>